<feature type="chain" id="PRO_1000125430" description="ATP-dependent protease ATPase subunit HslU">
    <location>
        <begin position="1"/>
        <end position="443"/>
    </location>
</feature>
<feature type="binding site" evidence="1">
    <location>
        <position position="18"/>
    </location>
    <ligand>
        <name>ATP</name>
        <dbReference type="ChEBI" id="CHEBI:30616"/>
    </ligand>
</feature>
<feature type="binding site" evidence="1">
    <location>
        <begin position="60"/>
        <end position="65"/>
    </location>
    <ligand>
        <name>ATP</name>
        <dbReference type="ChEBI" id="CHEBI:30616"/>
    </ligand>
</feature>
<feature type="binding site" evidence="1">
    <location>
        <position position="256"/>
    </location>
    <ligand>
        <name>ATP</name>
        <dbReference type="ChEBI" id="CHEBI:30616"/>
    </ligand>
</feature>
<feature type="binding site" evidence="1">
    <location>
        <position position="321"/>
    </location>
    <ligand>
        <name>ATP</name>
        <dbReference type="ChEBI" id="CHEBI:30616"/>
    </ligand>
</feature>
<feature type="binding site" evidence="1">
    <location>
        <position position="393"/>
    </location>
    <ligand>
        <name>ATP</name>
        <dbReference type="ChEBI" id="CHEBI:30616"/>
    </ligand>
</feature>
<gene>
    <name evidence="1" type="primary">hslU</name>
    <name type="ordered locus">BUAP5A_572</name>
</gene>
<keyword id="KW-0067">ATP-binding</keyword>
<keyword id="KW-0143">Chaperone</keyword>
<keyword id="KW-0963">Cytoplasm</keyword>
<keyword id="KW-0547">Nucleotide-binding</keyword>
<sequence>MSEMTPPQIVSELDKFIIGQEKAKRAVSIALRNRWRRMQLNSELRYEVTPKNILMIGPTGVGKTEIARRLAKLADSPFIKVEATKFTEVGYVGKEVDSIIRDLTDAAIKMIRIKNINKNKVRVEEIVEEKILDVLVPTPKKNWTESEKNESLAKTIQTFRKKLREGVLDEKEIEINILSTTMGVEIMAPPGMEELTNQLQSLFQNLGGHKKSSRRLKIKDAIVLLTEEEAAKLINQEEIKKEAINAVEQNGIVFIDEIDKICRRGDSSGPDISREGVQRDLLPLVEGCTVSTKHGMVKTDHILFIASGAFQTSTPSDLIPELQGRLPIKVELQALTIDDFEKILTEPTASITAQYKALMETEGVYINFTKEGIRNIAEAAWKVNESIENIGARRLHTVLEKLMEDISFNASDNKGNTIEINSNYVEEHLDQLTSNEDLGRFIL</sequence>
<name>HSLU_BUCA5</name>
<comment type="function">
    <text evidence="1">ATPase subunit of a proteasome-like degradation complex; this subunit has chaperone activity. The binding of ATP and its subsequent hydrolysis by HslU are essential for unfolding of protein substrates subsequently hydrolyzed by HslV. HslU recognizes the N-terminal part of its protein substrates and unfolds these before they are guided to HslV for hydrolysis.</text>
</comment>
<comment type="subunit">
    <text evidence="1">A double ring-shaped homohexamer of HslV is capped on each side by a ring-shaped HslU homohexamer. The assembly of the HslU/HslV complex is dependent on binding of ATP.</text>
</comment>
<comment type="subcellular location">
    <subcellularLocation>
        <location evidence="1">Cytoplasm</location>
    </subcellularLocation>
</comment>
<comment type="similarity">
    <text evidence="1">Belongs to the ClpX chaperone family. HslU subfamily.</text>
</comment>
<organism>
    <name type="scientific">Buchnera aphidicola subsp. Acyrthosiphon pisum (strain 5A)</name>
    <dbReference type="NCBI Taxonomy" id="563178"/>
    <lineage>
        <taxon>Bacteria</taxon>
        <taxon>Pseudomonadati</taxon>
        <taxon>Pseudomonadota</taxon>
        <taxon>Gammaproteobacteria</taxon>
        <taxon>Enterobacterales</taxon>
        <taxon>Erwiniaceae</taxon>
        <taxon>Buchnera</taxon>
    </lineage>
</organism>
<proteinExistence type="inferred from homology"/>
<dbReference type="EMBL" id="CP001161">
    <property type="protein sequence ID" value="ACL30918.1"/>
    <property type="molecule type" value="Genomic_DNA"/>
</dbReference>
<dbReference type="RefSeq" id="WP_009874529.1">
    <property type="nucleotide sequence ID" value="NC_011833.1"/>
</dbReference>
<dbReference type="SMR" id="B8D8E2"/>
<dbReference type="KEGG" id="bap:BUAP5A_572"/>
<dbReference type="HOGENOM" id="CLU_033123_0_0_6"/>
<dbReference type="OrthoDB" id="9804062at2"/>
<dbReference type="Proteomes" id="UP000006904">
    <property type="component" value="Chromosome"/>
</dbReference>
<dbReference type="GO" id="GO:0009376">
    <property type="term" value="C:HslUV protease complex"/>
    <property type="evidence" value="ECO:0007669"/>
    <property type="project" value="UniProtKB-UniRule"/>
</dbReference>
<dbReference type="GO" id="GO:0005524">
    <property type="term" value="F:ATP binding"/>
    <property type="evidence" value="ECO:0007669"/>
    <property type="project" value="UniProtKB-UniRule"/>
</dbReference>
<dbReference type="GO" id="GO:0016887">
    <property type="term" value="F:ATP hydrolysis activity"/>
    <property type="evidence" value="ECO:0007669"/>
    <property type="project" value="InterPro"/>
</dbReference>
<dbReference type="GO" id="GO:0008233">
    <property type="term" value="F:peptidase activity"/>
    <property type="evidence" value="ECO:0007669"/>
    <property type="project" value="InterPro"/>
</dbReference>
<dbReference type="GO" id="GO:0036402">
    <property type="term" value="F:proteasome-activating activity"/>
    <property type="evidence" value="ECO:0007669"/>
    <property type="project" value="UniProtKB-UniRule"/>
</dbReference>
<dbReference type="GO" id="GO:0043335">
    <property type="term" value="P:protein unfolding"/>
    <property type="evidence" value="ECO:0007669"/>
    <property type="project" value="UniProtKB-UniRule"/>
</dbReference>
<dbReference type="GO" id="GO:0051603">
    <property type="term" value="P:proteolysis involved in protein catabolic process"/>
    <property type="evidence" value="ECO:0007669"/>
    <property type="project" value="TreeGrafter"/>
</dbReference>
<dbReference type="CDD" id="cd19498">
    <property type="entry name" value="RecA-like_HslU"/>
    <property type="match status" value="1"/>
</dbReference>
<dbReference type="FunFam" id="1.10.8.10:FF:000028">
    <property type="entry name" value="ATP-dependent protease ATPase subunit HslU"/>
    <property type="match status" value="1"/>
</dbReference>
<dbReference type="FunFam" id="3.40.50.300:FF:000213">
    <property type="entry name" value="ATP-dependent protease ATPase subunit HslU"/>
    <property type="match status" value="1"/>
</dbReference>
<dbReference type="FunFam" id="3.40.50.300:FF:000220">
    <property type="entry name" value="ATP-dependent protease ATPase subunit HslU"/>
    <property type="match status" value="1"/>
</dbReference>
<dbReference type="Gene3D" id="1.10.8.60">
    <property type="match status" value="1"/>
</dbReference>
<dbReference type="Gene3D" id="1.10.8.10">
    <property type="entry name" value="DNA helicase RuvA subunit, C-terminal domain"/>
    <property type="match status" value="2"/>
</dbReference>
<dbReference type="Gene3D" id="3.40.50.300">
    <property type="entry name" value="P-loop containing nucleotide triphosphate hydrolases"/>
    <property type="match status" value="1"/>
</dbReference>
<dbReference type="HAMAP" id="MF_00249">
    <property type="entry name" value="HslU"/>
    <property type="match status" value="1"/>
</dbReference>
<dbReference type="InterPro" id="IPR003593">
    <property type="entry name" value="AAA+_ATPase"/>
</dbReference>
<dbReference type="InterPro" id="IPR050052">
    <property type="entry name" value="ATP-dep_Clp_protease_ClpX"/>
</dbReference>
<dbReference type="InterPro" id="IPR003959">
    <property type="entry name" value="ATPase_AAA_core"/>
</dbReference>
<dbReference type="InterPro" id="IPR019489">
    <property type="entry name" value="Clp_ATPase_C"/>
</dbReference>
<dbReference type="InterPro" id="IPR004491">
    <property type="entry name" value="HslU"/>
</dbReference>
<dbReference type="InterPro" id="IPR027417">
    <property type="entry name" value="P-loop_NTPase"/>
</dbReference>
<dbReference type="NCBIfam" id="TIGR00390">
    <property type="entry name" value="hslU"/>
    <property type="match status" value="1"/>
</dbReference>
<dbReference type="NCBIfam" id="NF003544">
    <property type="entry name" value="PRK05201.1"/>
    <property type="match status" value="1"/>
</dbReference>
<dbReference type="PANTHER" id="PTHR48102">
    <property type="entry name" value="ATP-DEPENDENT CLP PROTEASE ATP-BINDING SUBUNIT CLPX-LIKE, MITOCHONDRIAL-RELATED"/>
    <property type="match status" value="1"/>
</dbReference>
<dbReference type="PANTHER" id="PTHR48102:SF3">
    <property type="entry name" value="ATP-DEPENDENT PROTEASE ATPASE SUBUNIT HSLU"/>
    <property type="match status" value="1"/>
</dbReference>
<dbReference type="Pfam" id="PF00004">
    <property type="entry name" value="AAA"/>
    <property type="match status" value="1"/>
</dbReference>
<dbReference type="Pfam" id="PF07724">
    <property type="entry name" value="AAA_2"/>
    <property type="match status" value="1"/>
</dbReference>
<dbReference type="SMART" id="SM00382">
    <property type="entry name" value="AAA"/>
    <property type="match status" value="1"/>
</dbReference>
<dbReference type="SMART" id="SM01086">
    <property type="entry name" value="ClpB_D2-small"/>
    <property type="match status" value="1"/>
</dbReference>
<dbReference type="SUPFAM" id="SSF52540">
    <property type="entry name" value="P-loop containing nucleoside triphosphate hydrolases"/>
    <property type="match status" value="1"/>
</dbReference>
<protein>
    <recommendedName>
        <fullName evidence="1">ATP-dependent protease ATPase subunit HslU</fullName>
    </recommendedName>
    <alternativeName>
        <fullName evidence="1">Unfoldase HslU</fullName>
    </alternativeName>
</protein>
<reference key="1">
    <citation type="journal article" date="2009" name="Science">
        <title>The dynamics and time scale of ongoing genomic erosion in symbiotic bacteria.</title>
        <authorList>
            <person name="Moran N.A."/>
            <person name="McLaughlin H.J."/>
            <person name="Sorek R."/>
        </authorList>
    </citation>
    <scope>NUCLEOTIDE SEQUENCE [LARGE SCALE GENOMIC DNA]</scope>
    <source>
        <strain>5A</strain>
    </source>
</reference>
<accession>B8D8E2</accession>
<evidence type="ECO:0000255" key="1">
    <source>
        <dbReference type="HAMAP-Rule" id="MF_00249"/>
    </source>
</evidence>